<proteinExistence type="inferred from homology"/>
<gene>
    <name evidence="1" type="primary">plsX</name>
    <name type="ordered locus">YPN_2033</name>
    <name type="ORF">YP516_2265</name>
</gene>
<keyword id="KW-0963">Cytoplasm</keyword>
<keyword id="KW-0444">Lipid biosynthesis</keyword>
<keyword id="KW-0443">Lipid metabolism</keyword>
<keyword id="KW-0594">Phospholipid biosynthesis</keyword>
<keyword id="KW-1208">Phospholipid metabolism</keyword>
<keyword id="KW-0808">Transferase</keyword>
<organism>
    <name type="scientific">Yersinia pestis bv. Antiqua (strain Nepal516)</name>
    <dbReference type="NCBI Taxonomy" id="377628"/>
    <lineage>
        <taxon>Bacteria</taxon>
        <taxon>Pseudomonadati</taxon>
        <taxon>Pseudomonadota</taxon>
        <taxon>Gammaproteobacteria</taxon>
        <taxon>Enterobacterales</taxon>
        <taxon>Yersiniaceae</taxon>
        <taxon>Yersinia</taxon>
    </lineage>
</organism>
<comment type="function">
    <text evidence="1">Catalyzes the reversible formation of acyl-phosphate (acyl-PO(4)) from acyl-[acyl-carrier-protein] (acyl-ACP). This enzyme utilizes acyl-ACP as fatty acyl donor, but not acyl-CoA.</text>
</comment>
<comment type="catalytic activity">
    <reaction evidence="1">
        <text>a fatty acyl-[ACP] + phosphate = an acyl phosphate + holo-[ACP]</text>
        <dbReference type="Rhea" id="RHEA:42292"/>
        <dbReference type="Rhea" id="RHEA-COMP:9685"/>
        <dbReference type="Rhea" id="RHEA-COMP:14125"/>
        <dbReference type="ChEBI" id="CHEBI:43474"/>
        <dbReference type="ChEBI" id="CHEBI:59918"/>
        <dbReference type="ChEBI" id="CHEBI:64479"/>
        <dbReference type="ChEBI" id="CHEBI:138651"/>
        <dbReference type="EC" id="2.3.1.274"/>
    </reaction>
</comment>
<comment type="pathway">
    <text evidence="1">Lipid metabolism; phospholipid metabolism.</text>
</comment>
<comment type="subunit">
    <text evidence="1">Homodimer. Probably interacts with PlsY.</text>
</comment>
<comment type="subcellular location">
    <subcellularLocation>
        <location evidence="1">Cytoplasm</location>
    </subcellularLocation>
    <text evidence="1">Associated with the membrane possibly through PlsY.</text>
</comment>
<comment type="similarity">
    <text evidence="1">Belongs to the PlsX family.</text>
</comment>
<dbReference type="EC" id="2.3.1.274" evidence="1"/>
<dbReference type="EMBL" id="CP000305">
    <property type="protein sequence ID" value="ABG18362.1"/>
    <property type="molecule type" value="Genomic_DNA"/>
</dbReference>
<dbReference type="EMBL" id="ACNQ01000011">
    <property type="protein sequence ID" value="EEO76663.1"/>
    <property type="molecule type" value="Genomic_DNA"/>
</dbReference>
<dbReference type="RefSeq" id="WP_002210932.1">
    <property type="nucleotide sequence ID" value="NZ_ACNQ01000011.1"/>
</dbReference>
<dbReference type="SMR" id="Q1CI18"/>
<dbReference type="GeneID" id="57976975"/>
<dbReference type="KEGG" id="ypn:YPN_2033"/>
<dbReference type="HOGENOM" id="CLU_039379_1_0_6"/>
<dbReference type="UniPathway" id="UPA00085"/>
<dbReference type="Proteomes" id="UP000008936">
    <property type="component" value="Chromosome"/>
</dbReference>
<dbReference type="GO" id="GO:0005737">
    <property type="term" value="C:cytoplasm"/>
    <property type="evidence" value="ECO:0007669"/>
    <property type="project" value="UniProtKB-SubCell"/>
</dbReference>
<dbReference type="GO" id="GO:0043811">
    <property type="term" value="F:phosphate:acyl-[acyl carrier protein] acyltransferase activity"/>
    <property type="evidence" value="ECO:0007669"/>
    <property type="project" value="UniProtKB-UniRule"/>
</dbReference>
<dbReference type="GO" id="GO:0006633">
    <property type="term" value="P:fatty acid biosynthetic process"/>
    <property type="evidence" value="ECO:0007669"/>
    <property type="project" value="UniProtKB-UniRule"/>
</dbReference>
<dbReference type="GO" id="GO:0008654">
    <property type="term" value="P:phospholipid biosynthetic process"/>
    <property type="evidence" value="ECO:0007669"/>
    <property type="project" value="UniProtKB-KW"/>
</dbReference>
<dbReference type="FunFam" id="3.40.718.10:FF:000008">
    <property type="entry name" value="Phosphate acyltransferase"/>
    <property type="match status" value="1"/>
</dbReference>
<dbReference type="Gene3D" id="3.40.718.10">
    <property type="entry name" value="Isopropylmalate Dehydrogenase"/>
    <property type="match status" value="1"/>
</dbReference>
<dbReference type="HAMAP" id="MF_00019">
    <property type="entry name" value="PlsX"/>
    <property type="match status" value="1"/>
</dbReference>
<dbReference type="InterPro" id="IPR003664">
    <property type="entry name" value="FA_synthesis"/>
</dbReference>
<dbReference type="InterPro" id="IPR012281">
    <property type="entry name" value="Phospholipid_synth_PlsX-like"/>
</dbReference>
<dbReference type="NCBIfam" id="TIGR00182">
    <property type="entry name" value="plsX"/>
    <property type="match status" value="1"/>
</dbReference>
<dbReference type="PANTHER" id="PTHR30100">
    <property type="entry name" value="FATTY ACID/PHOSPHOLIPID SYNTHESIS PROTEIN PLSX"/>
    <property type="match status" value="1"/>
</dbReference>
<dbReference type="PANTHER" id="PTHR30100:SF1">
    <property type="entry name" value="PHOSPHATE ACYLTRANSFERASE"/>
    <property type="match status" value="1"/>
</dbReference>
<dbReference type="Pfam" id="PF02504">
    <property type="entry name" value="FA_synthesis"/>
    <property type="match status" value="1"/>
</dbReference>
<dbReference type="PIRSF" id="PIRSF002465">
    <property type="entry name" value="Phsphlp_syn_PlsX"/>
    <property type="match status" value="1"/>
</dbReference>
<dbReference type="SUPFAM" id="SSF53659">
    <property type="entry name" value="Isocitrate/Isopropylmalate dehydrogenase-like"/>
    <property type="match status" value="1"/>
</dbReference>
<sequence>MACLTLALDAMGGDFGPCVTVPASLQALASNPQLKLLLVGNPDTITPLLANADSLLLERLQVIPAEHVIASDAKPSQAIRASRGTSMRVALELVKNGEAAACVSAGNTGALMGLAKMMIKPLEGIARPALMTVIPNQRRSKTVVLDLGANVECDSTMLVQFAVMGSVMAEEVVGIVEPRVALLNIGEEENKGLDNIREAAAVLKNTPAINYIGYLEGNDLLTGKTDVMVCDGFVGNVTLKTMEGVIRMFLSLLKPSGEGSKQSWWLKLIGRWLQKRVAKRFGHLNPDQYNGACLLGLRGIVIKSHGAANQRAFAVAIEQAVQAVQRQVPERIAARLEAVLPKSD</sequence>
<accession>Q1CI18</accession>
<accession>C4GTZ9</accession>
<feature type="chain" id="PRO_1000001863" description="Phosphate acyltransferase">
    <location>
        <begin position="1"/>
        <end position="344"/>
    </location>
</feature>
<name>PLSX_YERPN</name>
<reference key="1">
    <citation type="journal article" date="2006" name="J. Bacteriol.">
        <title>Complete genome sequence of Yersinia pestis strains Antiqua and Nepal516: evidence of gene reduction in an emerging pathogen.</title>
        <authorList>
            <person name="Chain P.S.G."/>
            <person name="Hu P."/>
            <person name="Malfatti S.A."/>
            <person name="Radnedge L."/>
            <person name="Larimer F."/>
            <person name="Vergez L.M."/>
            <person name="Worsham P."/>
            <person name="Chu M.C."/>
            <person name="Andersen G.L."/>
        </authorList>
    </citation>
    <scope>NUCLEOTIDE SEQUENCE [LARGE SCALE GENOMIC DNA]</scope>
    <source>
        <strain>Nepal516</strain>
    </source>
</reference>
<reference key="2">
    <citation type="submission" date="2009-04" db="EMBL/GenBank/DDBJ databases">
        <title>Yersinia pestis Nepal516A whole genome shotgun sequencing project.</title>
        <authorList>
            <person name="Plunkett G. III"/>
            <person name="Anderson B.D."/>
            <person name="Baumler D.J."/>
            <person name="Burland V."/>
            <person name="Cabot E.L."/>
            <person name="Glasner J.D."/>
            <person name="Mau B."/>
            <person name="Neeno-Eckwall E."/>
            <person name="Perna N.T."/>
            <person name="Munk A.C."/>
            <person name="Tapia R."/>
            <person name="Green L.D."/>
            <person name="Rogers Y.C."/>
            <person name="Detter J.C."/>
            <person name="Bruce D.C."/>
            <person name="Brettin T.S."/>
        </authorList>
    </citation>
    <scope>NUCLEOTIDE SEQUENCE [LARGE SCALE GENOMIC DNA]</scope>
    <source>
        <strain>Nepal516</strain>
    </source>
</reference>
<protein>
    <recommendedName>
        <fullName evidence="1">Phosphate acyltransferase</fullName>
        <ecNumber evidence="1">2.3.1.274</ecNumber>
    </recommendedName>
    <alternativeName>
        <fullName evidence="1">Acyl-ACP phosphotransacylase</fullName>
    </alternativeName>
    <alternativeName>
        <fullName evidence="1">Acyl-[acyl-carrier-protein]--phosphate acyltransferase</fullName>
    </alternativeName>
    <alternativeName>
        <fullName evidence="1">Phosphate-acyl-ACP acyltransferase</fullName>
    </alternativeName>
</protein>
<evidence type="ECO:0000255" key="1">
    <source>
        <dbReference type="HAMAP-Rule" id="MF_00019"/>
    </source>
</evidence>